<feature type="chain" id="PRO_1000047744" description="Porphobilinogen deaminase">
    <location>
        <begin position="1"/>
        <end position="290"/>
    </location>
</feature>
<feature type="modified residue" description="S-(dipyrrolylmethanemethyl)cysteine" evidence="1">
    <location>
        <position position="237"/>
    </location>
</feature>
<accession>A7FSG8</accession>
<reference key="1">
    <citation type="journal article" date="2007" name="PLoS ONE">
        <title>Analysis of the neurotoxin complex genes in Clostridium botulinum A1-A4 and B1 strains: BoNT/A3, /Ba4 and /B1 clusters are located within plasmids.</title>
        <authorList>
            <person name="Smith T.J."/>
            <person name="Hill K.K."/>
            <person name="Foley B.T."/>
            <person name="Detter J.C."/>
            <person name="Munk A.C."/>
            <person name="Bruce D.C."/>
            <person name="Doggett N.A."/>
            <person name="Smith L.A."/>
            <person name="Marks J.D."/>
            <person name="Xie G."/>
            <person name="Brettin T.S."/>
        </authorList>
    </citation>
    <scope>NUCLEOTIDE SEQUENCE [LARGE SCALE GENOMIC DNA]</scope>
    <source>
        <strain>ATCC 19397 / Type A</strain>
    </source>
</reference>
<gene>
    <name evidence="1" type="primary">hemC</name>
    <name type="ordered locus">CLB_0961</name>
</gene>
<dbReference type="EC" id="2.5.1.61" evidence="1"/>
<dbReference type="EMBL" id="CP000726">
    <property type="protein sequence ID" value="ABS35825.1"/>
    <property type="molecule type" value="Genomic_DNA"/>
</dbReference>
<dbReference type="RefSeq" id="WP_011948607.1">
    <property type="nucleotide sequence ID" value="NC_009697.1"/>
</dbReference>
<dbReference type="SMR" id="A7FSG8"/>
<dbReference type="GeneID" id="5185175"/>
<dbReference type="KEGG" id="cba:CLB_0961"/>
<dbReference type="HOGENOM" id="CLU_019704_0_2_9"/>
<dbReference type="UniPathway" id="UPA00251">
    <property type="reaction ID" value="UER00319"/>
</dbReference>
<dbReference type="GO" id="GO:0005737">
    <property type="term" value="C:cytoplasm"/>
    <property type="evidence" value="ECO:0007669"/>
    <property type="project" value="TreeGrafter"/>
</dbReference>
<dbReference type="GO" id="GO:0004418">
    <property type="term" value="F:hydroxymethylbilane synthase activity"/>
    <property type="evidence" value="ECO:0007669"/>
    <property type="project" value="UniProtKB-UniRule"/>
</dbReference>
<dbReference type="GO" id="GO:0006782">
    <property type="term" value="P:protoporphyrinogen IX biosynthetic process"/>
    <property type="evidence" value="ECO:0007669"/>
    <property type="project" value="UniProtKB-UniRule"/>
</dbReference>
<dbReference type="FunFam" id="3.40.190.10:FF:000005">
    <property type="entry name" value="Porphobilinogen deaminase"/>
    <property type="match status" value="1"/>
</dbReference>
<dbReference type="Gene3D" id="3.40.190.10">
    <property type="entry name" value="Periplasmic binding protein-like II"/>
    <property type="match status" value="2"/>
</dbReference>
<dbReference type="Gene3D" id="3.30.160.40">
    <property type="entry name" value="Porphobilinogen deaminase, C-terminal domain"/>
    <property type="match status" value="1"/>
</dbReference>
<dbReference type="HAMAP" id="MF_00260">
    <property type="entry name" value="Porphobil_deam"/>
    <property type="match status" value="1"/>
</dbReference>
<dbReference type="InterPro" id="IPR000860">
    <property type="entry name" value="HemC"/>
</dbReference>
<dbReference type="InterPro" id="IPR022417">
    <property type="entry name" value="Porphobilin_deaminase_N"/>
</dbReference>
<dbReference type="InterPro" id="IPR022418">
    <property type="entry name" value="Porphobilinogen_deaminase_C"/>
</dbReference>
<dbReference type="InterPro" id="IPR036803">
    <property type="entry name" value="Porphobilinogen_deaminase_C_sf"/>
</dbReference>
<dbReference type="NCBIfam" id="TIGR00212">
    <property type="entry name" value="hemC"/>
    <property type="match status" value="1"/>
</dbReference>
<dbReference type="PANTHER" id="PTHR11557">
    <property type="entry name" value="PORPHOBILINOGEN DEAMINASE"/>
    <property type="match status" value="1"/>
</dbReference>
<dbReference type="PANTHER" id="PTHR11557:SF0">
    <property type="entry name" value="PORPHOBILINOGEN DEAMINASE"/>
    <property type="match status" value="1"/>
</dbReference>
<dbReference type="Pfam" id="PF01379">
    <property type="entry name" value="Porphobil_deam"/>
    <property type="match status" value="1"/>
</dbReference>
<dbReference type="Pfam" id="PF03900">
    <property type="entry name" value="Porphobil_deamC"/>
    <property type="match status" value="1"/>
</dbReference>
<dbReference type="PIRSF" id="PIRSF001438">
    <property type="entry name" value="4pyrrol_synth_OHMeBilane_synth"/>
    <property type="match status" value="1"/>
</dbReference>
<dbReference type="PRINTS" id="PR00151">
    <property type="entry name" value="PORPHBDMNASE"/>
</dbReference>
<dbReference type="SUPFAM" id="SSF53850">
    <property type="entry name" value="Periplasmic binding protein-like II"/>
    <property type="match status" value="1"/>
</dbReference>
<dbReference type="SUPFAM" id="SSF54782">
    <property type="entry name" value="Porphobilinogen deaminase (hydroxymethylbilane synthase), C-terminal domain"/>
    <property type="match status" value="1"/>
</dbReference>
<sequence>MNFVIATRRSKLAQVQTEIIIDLLNKKHDIECEKLLIETVGDKILEVSLDKIGGKGLFVKDIEVAMLEQRADAAVHSMKDVPYEMPKGFEIIAIPEREDVRDAFISLDNIKFKDLRKGAKIGTSSRRRAAQLKLLRPDLDIVPIRGNVQTRIEKIKKENLDGVILAVAGLKRVNLDHLITDYFDTKEMVPAIGQGALGIEVMEEHPKKELFKDLDHYNSKICVLAERAFMRELDGDCHSTIGAYASIKDNIMHIIGIFERKNKIIKKEITGTKDQYEKLGISLAEHILKD</sequence>
<evidence type="ECO:0000255" key="1">
    <source>
        <dbReference type="HAMAP-Rule" id="MF_00260"/>
    </source>
</evidence>
<proteinExistence type="inferred from homology"/>
<keyword id="KW-0627">Porphyrin biosynthesis</keyword>
<keyword id="KW-0808">Transferase</keyword>
<name>HEM3_CLOB1</name>
<organism>
    <name type="scientific">Clostridium botulinum (strain ATCC 19397 / Type A)</name>
    <dbReference type="NCBI Taxonomy" id="441770"/>
    <lineage>
        <taxon>Bacteria</taxon>
        <taxon>Bacillati</taxon>
        <taxon>Bacillota</taxon>
        <taxon>Clostridia</taxon>
        <taxon>Eubacteriales</taxon>
        <taxon>Clostridiaceae</taxon>
        <taxon>Clostridium</taxon>
    </lineage>
</organism>
<comment type="function">
    <text evidence="1">Tetrapolymerization of the monopyrrole PBG into the hydroxymethylbilane pre-uroporphyrinogen in several discrete steps.</text>
</comment>
<comment type="catalytic activity">
    <reaction evidence="1">
        <text>4 porphobilinogen + H2O = hydroxymethylbilane + 4 NH4(+)</text>
        <dbReference type="Rhea" id="RHEA:13185"/>
        <dbReference type="ChEBI" id="CHEBI:15377"/>
        <dbReference type="ChEBI" id="CHEBI:28938"/>
        <dbReference type="ChEBI" id="CHEBI:57845"/>
        <dbReference type="ChEBI" id="CHEBI:58126"/>
        <dbReference type="EC" id="2.5.1.61"/>
    </reaction>
</comment>
<comment type="cofactor">
    <cofactor evidence="1">
        <name>dipyrromethane</name>
        <dbReference type="ChEBI" id="CHEBI:60342"/>
    </cofactor>
    <text evidence="1">Binds 1 dipyrromethane group covalently.</text>
</comment>
<comment type="pathway">
    <text evidence="1">Porphyrin-containing compound metabolism; protoporphyrin-IX biosynthesis; coproporphyrinogen-III from 5-aminolevulinate: step 2/4.</text>
</comment>
<comment type="subunit">
    <text evidence="1">Monomer.</text>
</comment>
<comment type="miscellaneous">
    <text evidence="1">The porphobilinogen subunits are added to the dipyrromethane group.</text>
</comment>
<comment type="similarity">
    <text evidence="1">Belongs to the HMBS family.</text>
</comment>
<protein>
    <recommendedName>
        <fullName evidence="1">Porphobilinogen deaminase</fullName>
        <shortName evidence="1">PBG</shortName>
        <ecNumber evidence="1">2.5.1.61</ecNumber>
    </recommendedName>
    <alternativeName>
        <fullName evidence="1">Hydroxymethylbilane synthase</fullName>
        <shortName evidence="1">HMBS</shortName>
    </alternativeName>
    <alternativeName>
        <fullName evidence="1">Pre-uroporphyrinogen synthase</fullName>
    </alternativeName>
</protein>